<proteinExistence type="inferred from homology"/>
<feature type="chain" id="PRO_0000156240" description="Phosphopantetheine adenylyltransferase">
    <location>
        <begin position="1"/>
        <end position="150"/>
    </location>
</feature>
<feature type="binding site" evidence="1">
    <location>
        <begin position="15"/>
        <end position="16"/>
    </location>
    <ligand>
        <name>ATP</name>
        <dbReference type="ChEBI" id="CHEBI:30616"/>
    </ligand>
</feature>
<feature type="binding site" evidence="1">
    <location>
        <position position="15"/>
    </location>
    <ligand>
        <name>substrate</name>
    </ligand>
</feature>
<feature type="binding site" evidence="1">
    <location>
        <position position="23"/>
    </location>
    <ligand>
        <name>ATP</name>
        <dbReference type="ChEBI" id="CHEBI:30616"/>
    </ligand>
</feature>
<feature type="binding site" evidence="1">
    <location>
        <position position="80"/>
    </location>
    <ligand>
        <name>substrate</name>
    </ligand>
</feature>
<feature type="binding site" evidence="1">
    <location>
        <position position="94"/>
    </location>
    <ligand>
        <name>substrate</name>
    </ligand>
</feature>
<feature type="binding site" evidence="1">
    <location>
        <begin position="95"/>
        <end position="97"/>
    </location>
    <ligand>
        <name>ATP</name>
        <dbReference type="ChEBI" id="CHEBI:30616"/>
    </ligand>
</feature>
<feature type="binding site" evidence="1">
    <location>
        <position position="105"/>
    </location>
    <ligand>
        <name>ATP</name>
        <dbReference type="ChEBI" id="CHEBI:30616"/>
    </ligand>
</feature>
<feature type="binding site" evidence="1">
    <location>
        <begin position="130"/>
        <end position="136"/>
    </location>
    <ligand>
        <name>ATP</name>
        <dbReference type="ChEBI" id="CHEBI:30616"/>
    </ligand>
</feature>
<feature type="site" description="Transition state stabilizer" evidence="1">
    <location>
        <position position="23"/>
    </location>
</feature>
<comment type="function">
    <text evidence="1">Reversibly transfers an adenylyl group from ATP to 4'-phosphopantetheine, yielding dephospho-CoA (dPCoA) and pyrophosphate.</text>
</comment>
<comment type="catalytic activity">
    <reaction evidence="1">
        <text>(R)-4'-phosphopantetheine + ATP + H(+) = 3'-dephospho-CoA + diphosphate</text>
        <dbReference type="Rhea" id="RHEA:19801"/>
        <dbReference type="ChEBI" id="CHEBI:15378"/>
        <dbReference type="ChEBI" id="CHEBI:30616"/>
        <dbReference type="ChEBI" id="CHEBI:33019"/>
        <dbReference type="ChEBI" id="CHEBI:57328"/>
        <dbReference type="ChEBI" id="CHEBI:61723"/>
        <dbReference type="EC" id="2.7.7.3"/>
    </reaction>
</comment>
<comment type="cofactor">
    <cofactor evidence="1">
        <name>Mg(2+)</name>
        <dbReference type="ChEBI" id="CHEBI:18420"/>
    </cofactor>
</comment>
<comment type="pathway">
    <text evidence="1">Cofactor biosynthesis; coenzyme A biosynthesis; CoA from (R)-pantothenate: step 4/5.</text>
</comment>
<comment type="subunit">
    <text evidence="1">Homohexamer.</text>
</comment>
<comment type="subcellular location">
    <subcellularLocation>
        <location evidence="1">Cytoplasm</location>
    </subcellularLocation>
</comment>
<comment type="similarity">
    <text evidence="1">Belongs to the bacterial CoaD family.</text>
</comment>
<accession>Q8EUG2</accession>
<sequence length="150" mass="17831">MSLNQKKKACIFPGTFEVFHDGHLNILKRALKLFDFVYIVVAINNTKTSSDLEKRYQKVEEKIDSLSIKNVEVIKWDSKISDFAKIKTIYFIIRGIRDVNDFKFEKYIADIYKQEWDKLEVVYFFSEKKLENISSRKIINLNKGKNDYEN</sequence>
<keyword id="KW-0067">ATP-binding</keyword>
<keyword id="KW-0173">Coenzyme A biosynthesis</keyword>
<keyword id="KW-0963">Cytoplasm</keyword>
<keyword id="KW-0460">Magnesium</keyword>
<keyword id="KW-0547">Nucleotide-binding</keyword>
<keyword id="KW-0548">Nucleotidyltransferase</keyword>
<keyword id="KW-1185">Reference proteome</keyword>
<keyword id="KW-0808">Transferase</keyword>
<name>COAD_MALP2</name>
<organism>
    <name type="scientific">Malacoplasma penetrans (strain HF-2)</name>
    <name type="common">Mycoplasma penetrans</name>
    <dbReference type="NCBI Taxonomy" id="272633"/>
    <lineage>
        <taxon>Bacteria</taxon>
        <taxon>Bacillati</taxon>
        <taxon>Mycoplasmatota</taxon>
        <taxon>Mycoplasmoidales</taxon>
        <taxon>Mycoplasmoidaceae</taxon>
        <taxon>Malacoplasma</taxon>
    </lineage>
</organism>
<protein>
    <recommendedName>
        <fullName evidence="1">Phosphopantetheine adenylyltransferase</fullName>
        <ecNumber evidence="1">2.7.7.3</ecNumber>
    </recommendedName>
    <alternativeName>
        <fullName evidence="1">Dephospho-CoA pyrophosphorylase</fullName>
    </alternativeName>
    <alternativeName>
        <fullName evidence="1">Pantetheine-phosphate adenylyltransferase</fullName>
        <shortName evidence="1">PPAT</shortName>
    </alternativeName>
</protein>
<reference key="1">
    <citation type="journal article" date="2002" name="Nucleic Acids Res.">
        <title>The complete genomic sequence of Mycoplasma penetrans, an intracellular bacterial pathogen in humans.</title>
        <authorList>
            <person name="Sasaki Y."/>
            <person name="Ishikawa J."/>
            <person name="Yamashita A."/>
            <person name="Oshima K."/>
            <person name="Kenri T."/>
            <person name="Furuya K."/>
            <person name="Yoshino C."/>
            <person name="Horino A."/>
            <person name="Shiba T."/>
            <person name="Sasaki T."/>
            <person name="Hattori M."/>
        </authorList>
    </citation>
    <scope>NUCLEOTIDE SEQUENCE [LARGE SCALE GENOMIC DNA]</scope>
    <source>
        <strain>HF-2</strain>
    </source>
</reference>
<dbReference type="EC" id="2.7.7.3" evidence="1"/>
<dbReference type="EMBL" id="BA000026">
    <property type="protein sequence ID" value="BAC44751.1"/>
    <property type="molecule type" value="Genomic_DNA"/>
</dbReference>
<dbReference type="RefSeq" id="WP_011077780.1">
    <property type="nucleotide sequence ID" value="NC_004432.1"/>
</dbReference>
<dbReference type="SMR" id="Q8EUG2"/>
<dbReference type="FunCoup" id="Q8EUG2">
    <property type="interactions" value="188"/>
</dbReference>
<dbReference type="STRING" id="272633.gene:10732085"/>
<dbReference type="KEGG" id="mpe:MYPE9650"/>
<dbReference type="eggNOG" id="COG0669">
    <property type="taxonomic scope" value="Bacteria"/>
</dbReference>
<dbReference type="HOGENOM" id="CLU_100149_2_0_14"/>
<dbReference type="InParanoid" id="Q8EUG2"/>
<dbReference type="UniPathway" id="UPA00241">
    <property type="reaction ID" value="UER00355"/>
</dbReference>
<dbReference type="Proteomes" id="UP000002522">
    <property type="component" value="Chromosome"/>
</dbReference>
<dbReference type="GO" id="GO:0005737">
    <property type="term" value="C:cytoplasm"/>
    <property type="evidence" value="ECO:0007669"/>
    <property type="project" value="UniProtKB-SubCell"/>
</dbReference>
<dbReference type="GO" id="GO:0005524">
    <property type="term" value="F:ATP binding"/>
    <property type="evidence" value="ECO:0007669"/>
    <property type="project" value="UniProtKB-KW"/>
</dbReference>
<dbReference type="GO" id="GO:0004595">
    <property type="term" value="F:pantetheine-phosphate adenylyltransferase activity"/>
    <property type="evidence" value="ECO:0007669"/>
    <property type="project" value="UniProtKB-UniRule"/>
</dbReference>
<dbReference type="GO" id="GO:0015937">
    <property type="term" value="P:coenzyme A biosynthetic process"/>
    <property type="evidence" value="ECO:0007669"/>
    <property type="project" value="UniProtKB-UniRule"/>
</dbReference>
<dbReference type="Gene3D" id="3.40.50.620">
    <property type="entry name" value="HUPs"/>
    <property type="match status" value="1"/>
</dbReference>
<dbReference type="HAMAP" id="MF_00151">
    <property type="entry name" value="PPAT_bact"/>
    <property type="match status" value="1"/>
</dbReference>
<dbReference type="InterPro" id="IPR004821">
    <property type="entry name" value="Cyt_trans-like"/>
</dbReference>
<dbReference type="InterPro" id="IPR001980">
    <property type="entry name" value="PPAT"/>
</dbReference>
<dbReference type="InterPro" id="IPR014729">
    <property type="entry name" value="Rossmann-like_a/b/a_fold"/>
</dbReference>
<dbReference type="NCBIfam" id="TIGR01510">
    <property type="entry name" value="coaD_prev_kdtB"/>
    <property type="match status" value="1"/>
</dbReference>
<dbReference type="NCBIfam" id="TIGR00125">
    <property type="entry name" value="cyt_tran_rel"/>
    <property type="match status" value="1"/>
</dbReference>
<dbReference type="PANTHER" id="PTHR21342">
    <property type="entry name" value="PHOSPHOPANTETHEINE ADENYLYLTRANSFERASE"/>
    <property type="match status" value="1"/>
</dbReference>
<dbReference type="PANTHER" id="PTHR21342:SF1">
    <property type="entry name" value="PHOSPHOPANTETHEINE ADENYLYLTRANSFERASE"/>
    <property type="match status" value="1"/>
</dbReference>
<dbReference type="Pfam" id="PF01467">
    <property type="entry name" value="CTP_transf_like"/>
    <property type="match status" value="1"/>
</dbReference>
<dbReference type="PRINTS" id="PR01020">
    <property type="entry name" value="LPSBIOSNTHSS"/>
</dbReference>
<dbReference type="SUPFAM" id="SSF52374">
    <property type="entry name" value="Nucleotidylyl transferase"/>
    <property type="match status" value="1"/>
</dbReference>
<evidence type="ECO:0000255" key="1">
    <source>
        <dbReference type="HAMAP-Rule" id="MF_00151"/>
    </source>
</evidence>
<gene>
    <name evidence="1" type="primary">coaD</name>
    <name type="synonym">kdtB</name>
    <name type="ordered locus">MYPE9650</name>
</gene>